<evidence type="ECO:0000255" key="1">
    <source>
        <dbReference type="HAMAP-Rule" id="MF_00033"/>
    </source>
</evidence>
<comment type="function">
    <text evidence="1">Cell wall formation. Catalyzes the transfer of a GlcNAc subunit on undecaprenyl-pyrophosphoryl-MurNAc-pentapeptide (lipid intermediate I) to form undecaprenyl-pyrophosphoryl-MurNAc-(pentapeptide)GlcNAc (lipid intermediate II).</text>
</comment>
<comment type="catalytic activity">
    <reaction evidence="1">
        <text>di-trans,octa-cis-undecaprenyl diphospho-N-acetyl-alpha-D-muramoyl-L-alanyl-D-glutamyl-meso-2,6-diaminopimeloyl-D-alanyl-D-alanine + UDP-N-acetyl-alpha-D-glucosamine = di-trans,octa-cis-undecaprenyl diphospho-[N-acetyl-alpha-D-glucosaminyl-(1-&gt;4)]-N-acetyl-alpha-D-muramoyl-L-alanyl-D-glutamyl-meso-2,6-diaminopimeloyl-D-alanyl-D-alanine + UDP + H(+)</text>
        <dbReference type="Rhea" id="RHEA:31227"/>
        <dbReference type="ChEBI" id="CHEBI:15378"/>
        <dbReference type="ChEBI" id="CHEBI:57705"/>
        <dbReference type="ChEBI" id="CHEBI:58223"/>
        <dbReference type="ChEBI" id="CHEBI:61387"/>
        <dbReference type="ChEBI" id="CHEBI:61388"/>
        <dbReference type="EC" id="2.4.1.227"/>
    </reaction>
</comment>
<comment type="pathway">
    <text evidence="1">Cell wall biogenesis; peptidoglycan biosynthesis.</text>
</comment>
<comment type="subcellular location">
    <subcellularLocation>
        <location evidence="1">Cell inner membrane</location>
        <topology evidence="1">Peripheral membrane protein</topology>
        <orientation evidence="1">Cytoplasmic side</orientation>
    </subcellularLocation>
</comment>
<comment type="similarity">
    <text evidence="1">Belongs to the glycosyltransferase 28 family. MurG subfamily.</text>
</comment>
<accession>A1R0I9</accession>
<gene>
    <name evidence="1" type="primary">murG</name>
    <name type="ordered locus">BT0767</name>
</gene>
<keyword id="KW-0131">Cell cycle</keyword>
<keyword id="KW-0132">Cell division</keyword>
<keyword id="KW-0997">Cell inner membrane</keyword>
<keyword id="KW-1003">Cell membrane</keyword>
<keyword id="KW-0133">Cell shape</keyword>
<keyword id="KW-0961">Cell wall biogenesis/degradation</keyword>
<keyword id="KW-0328">Glycosyltransferase</keyword>
<keyword id="KW-0472">Membrane</keyword>
<keyword id="KW-0573">Peptidoglycan synthesis</keyword>
<keyword id="KW-1185">Reference proteome</keyword>
<keyword id="KW-0808">Transferase</keyword>
<reference key="1">
    <citation type="submission" date="2004-12" db="EMBL/GenBank/DDBJ databases">
        <title>The genome sequence of Borrelia hermsii and Borrelia turicatae: comparative analysis of two agents of endemic N. America relapsing fever.</title>
        <authorList>
            <person name="Porcella S.F."/>
            <person name="Raffel S.J."/>
            <person name="Schrumpf M.E."/>
            <person name="Montgomery B."/>
            <person name="Smith T."/>
            <person name="Schwan T.G."/>
        </authorList>
    </citation>
    <scope>NUCLEOTIDE SEQUENCE [LARGE SCALE GENOMIC DNA]</scope>
    <source>
        <strain>91E135</strain>
    </source>
</reference>
<proteinExistence type="inferred from homology"/>
<dbReference type="EC" id="2.4.1.227" evidence="1"/>
<dbReference type="EMBL" id="CP000049">
    <property type="protein sequence ID" value="AAX18080.1"/>
    <property type="molecule type" value="Genomic_DNA"/>
</dbReference>
<dbReference type="RefSeq" id="WP_011772698.1">
    <property type="nucleotide sequence ID" value="NC_008710.1"/>
</dbReference>
<dbReference type="SMR" id="A1R0I9"/>
<dbReference type="CAZy" id="GT28">
    <property type="family name" value="Glycosyltransferase Family 28"/>
</dbReference>
<dbReference type="KEGG" id="btu:BT0767"/>
<dbReference type="eggNOG" id="COG0707">
    <property type="taxonomic scope" value="Bacteria"/>
</dbReference>
<dbReference type="HOGENOM" id="CLU_037404_0_0_12"/>
<dbReference type="UniPathway" id="UPA00219"/>
<dbReference type="Proteomes" id="UP000001205">
    <property type="component" value="Chromosome"/>
</dbReference>
<dbReference type="GO" id="GO:0005886">
    <property type="term" value="C:plasma membrane"/>
    <property type="evidence" value="ECO:0007669"/>
    <property type="project" value="UniProtKB-SubCell"/>
</dbReference>
<dbReference type="GO" id="GO:0051991">
    <property type="term" value="F:UDP-N-acetyl-D-glucosamine:N-acetylmuramoyl-L-alanyl-D-glutamyl-meso-2,6-diaminopimelyl-D-alanyl-D-alanine-diphosphoundecaprenol 4-beta-N-acetylglucosaminlytransferase activity"/>
    <property type="evidence" value="ECO:0007669"/>
    <property type="project" value="RHEA"/>
</dbReference>
<dbReference type="GO" id="GO:0050511">
    <property type="term" value="F:undecaprenyldiphospho-muramoylpentapeptide beta-N-acetylglucosaminyltransferase activity"/>
    <property type="evidence" value="ECO:0007669"/>
    <property type="project" value="UniProtKB-UniRule"/>
</dbReference>
<dbReference type="GO" id="GO:0005975">
    <property type="term" value="P:carbohydrate metabolic process"/>
    <property type="evidence" value="ECO:0007669"/>
    <property type="project" value="InterPro"/>
</dbReference>
<dbReference type="GO" id="GO:0051301">
    <property type="term" value="P:cell division"/>
    <property type="evidence" value="ECO:0007669"/>
    <property type="project" value="UniProtKB-KW"/>
</dbReference>
<dbReference type="GO" id="GO:0071555">
    <property type="term" value="P:cell wall organization"/>
    <property type="evidence" value="ECO:0007669"/>
    <property type="project" value="UniProtKB-KW"/>
</dbReference>
<dbReference type="GO" id="GO:0030259">
    <property type="term" value="P:lipid glycosylation"/>
    <property type="evidence" value="ECO:0007669"/>
    <property type="project" value="UniProtKB-UniRule"/>
</dbReference>
<dbReference type="GO" id="GO:0009252">
    <property type="term" value="P:peptidoglycan biosynthetic process"/>
    <property type="evidence" value="ECO:0007669"/>
    <property type="project" value="UniProtKB-UniRule"/>
</dbReference>
<dbReference type="GO" id="GO:0008360">
    <property type="term" value="P:regulation of cell shape"/>
    <property type="evidence" value="ECO:0007669"/>
    <property type="project" value="UniProtKB-KW"/>
</dbReference>
<dbReference type="CDD" id="cd03785">
    <property type="entry name" value="GT28_MurG"/>
    <property type="match status" value="1"/>
</dbReference>
<dbReference type="Gene3D" id="3.40.50.2000">
    <property type="entry name" value="Glycogen Phosphorylase B"/>
    <property type="match status" value="2"/>
</dbReference>
<dbReference type="HAMAP" id="MF_00033">
    <property type="entry name" value="MurG"/>
    <property type="match status" value="1"/>
</dbReference>
<dbReference type="InterPro" id="IPR006009">
    <property type="entry name" value="GlcNAc_MurG"/>
</dbReference>
<dbReference type="InterPro" id="IPR007235">
    <property type="entry name" value="Glyco_trans_28_C"/>
</dbReference>
<dbReference type="InterPro" id="IPR004276">
    <property type="entry name" value="GlycoTrans_28_N"/>
</dbReference>
<dbReference type="NCBIfam" id="TIGR01133">
    <property type="entry name" value="murG"/>
    <property type="match status" value="1"/>
</dbReference>
<dbReference type="PANTHER" id="PTHR21015:SF27">
    <property type="entry name" value="UDP-N-ACETYLGLUCOSAMINE--N-ACETYLMURAMYL-(PENTAPEPTIDE) PYROPHOSPHORYL-UNDECAPRENOL N-ACETYLGLUCOSAMINE TRANSFERASE"/>
    <property type="match status" value="1"/>
</dbReference>
<dbReference type="PANTHER" id="PTHR21015">
    <property type="entry name" value="UDP-N-ACETYLGLUCOSAMINE--N-ACETYLMURAMYL-(PENTAPEPTIDE) PYROPHOSPHORYL-UNDECAPRENOL N-ACETYLGLUCOSAMINE TRANSFERASE 1"/>
    <property type="match status" value="1"/>
</dbReference>
<dbReference type="Pfam" id="PF04101">
    <property type="entry name" value="Glyco_tran_28_C"/>
    <property type="match status" value="1"/>
</dbReference>
<dbReference type="Pfam" id="PF03033">
    <property type="entry name" value="Glyco_transf_28"/>
    <property type="match status" value="1"/>
</dbReference>
<dbReference type="SUPFAM" id="SSF53756">
    <property type="entry name" value="UDP-Glycosyltransferase/glycogen phosphorylase"/>
    <property type="match status" value="1"/>
</dbReference>
<name>MURG_BORT9</name>
<organism>
    <name type="scientific">Borrelia turicatae (strain 91E135)</name>
    <dbReference type="NCBI Taxonomy" id="314724"/>
    <lineage>
        <taxon>Bacteria</taxon>
        <taxon>Pseudomonadati</taxon>
        <taxon>Spirochaetota</taxon>
        <taxon>Spirochaetia</taxon>
        <taxon>Spirochaetales</taxon>
        <taxon>Borreliaceae</taxon>
        <taxon>Borrelia</taxon>
    </lineage>
</organism>
<protein>
    <recommendedName>
        <fullName evidence="1">UDP-N-acetylglucosamine--N-acetylmuramyl-(pentapeptide) pyrophosphoryl-undecaprenol N-acetylglucosamine transferase</fullName>
        <ecNumber evidence="1">2.4.1.227</ecNumber>
    </recommendedName>
    <alternativeName>
        <fullName evidence="1">Undecaprenyl-PP-MurNAc-pentapeptide-UDPGlcNAc GlcNAc transferase</fullName>
    </alternativeName>
</protein>
<sequence>MKAKKRIFFTGGGTGGHVFPGIAIISKLRELDTNIEFFWLGQKDSMEDKIIKEHAYIKFIAIPSGKLRRYFSLQNFTDFFKVIFGIIKSFFIIKKYKPQIIYATGGFVSSPPIIAASLLKVKSITHEMDLDPGLATKINSKFANKIHISFKESTKYFKNKNVLYTGSPIRKEFSNPNPNIIKNLTQDTKKPIISILGGSLGAEILNKLTLNIKNKIDAYFIHQCGRNLDATRENNYLRSQFFNAEEMASIIKFSNIIISRAGSGAIKEFANAGACVIFIPFVKGSRGDQIRNAKLLEEQNACFKIDEENLSESKIINIIKEILENKEKSNILRNNIKEFHNQDSSNLIANLLLKEFGKINAG</sequence>
<feature type="chain" id="PRO_1000117003" description="UDP-N-acetylglucosamine--N-acetylmuramyl-(pentapeptide) pyrophosphoryl-undecaprenol N-acetylglucosamine transferase">
    <location>
        <begin position="1"/>
        <end position="362"/>
    </location>
</feature>
<feature type="binding site" evidence="1">
    <location>
        <begin position="14"/>
        <end position="16"/>
    </location>
    <ligand>
        <name>UDP-N-acetyl-alpha-D-glucosamine</name>
        <dbReference type="ChEBI" id="CHEBI:57705"/>
    </ligand>
</feature>
<feature type="binding site" evidence="1">
    <location>
        <position position="170"/>
    </location>
    <ligand>
        <name>UDP-N-acetyl-alpha-D-glucosamine</name>
        <dbReference type="ChEBI" id="CHEBI:57705"/>
    </ligand>
</feature>
<feature type="binding site" evidence="1">
    <location>
        <position position="199"/>
    </location>
    <ligand>
        <name>UDP-N-acetyl-alpha-D-glucosamine</name>
        <dbReference type="ChEBI" id="CHEBI:57705"/>
    </ligand>
</feature>
<feature type="binding site" evidence="1">
    <location>
        <position position="289"/>
    </location>
    <ligand>
        <name>UDP-N-acetyl-alpha-D-glucosamine</name>
        <dbReference type="ChEBI" id="CHEBI:57705"/>
    </ligand>
</feature>